<feature type="chain" id="PRO_1000122774" description="UDP-3-O-acyl-N-acetylglucosamine deacetylase">
    <location>
        <begin position="1"/>
        <end position="303"/>
    </location>
</feature>
<feature type="active site" description="Proton donor" evidence="1">
    <location>
        <position position="264"/>
    </location>
</feature>
<feature type="binding site" evidence="1">
    <location>
        <position position="78"/>
    </location>
    <ligand>
        <name>Zn(2+)</name>
        <dbReference type="ChEBI" id="CHEBI:29105"/>
    </ligand>
</feature>
<feature type="binding site" evidence="1">
    <location>
        <position position="237"/>
    </location>
    <ligand>
        <name>Zn(2+)</name>
        <dbReference type="ChEBI" id="CHEBI:29105"/>
    </ligand>
</feature>
<feature type="binding site" evidence="1">
    <location>
        <position position="241"/>
    </location>
    <ligand>
        <name>Zn(2+)</name>
        <dbReference type="ChEBI" id="CHEBI:29105"/>
    </ligand>
</feature>
<sequence>MIKQRTLKNVVRATGVGVHTGEKVYLTLRPAPPNTGIIFCRTDLDPVVQIPARVNYIGDTSLSTCLTKGDVRIATVEHLLSALAGVGVDNLYIDLTSPELPIMDGSAGPFVFLIQSAGIEEQNAPKEFIRIKQRVKIEEADKSVMVEPYNGFKISFGIDFDHPLFNEHNQNATLDFSSTSYVKEVSRARTFGFLSDYEFIRKNNLALGASLDNALVLDEYKILNQDGLRYPDEFVKHKILDVIGDLYLLGRSLIGSFSGVKSGHTLNSQLLKKLLATKSAWEIVTFKDPSELPFAYTPVAMTA</sequence>
<keyword id="KW-0378">Hydrolase</keyword>
<keyword id="KW-0441">Lipid A biosynthesis</keyword>
<keyword id="KW-0444">Lipid biosynthesis</keyword>
<keyword id="KW-0443">Lipid metabolism</keyword>
<keyword id="KW-0479">Metal-binding</keyword>
<keyword id="KW-0862">Zinc</keyword>
<organism>
    <name type="scientific">Coxiella burnetii (strain CbuK_Q154)</name>
    <name type="common">Coxiella burnetii (strain Q154)</name>
    <dbReference type="NCBI Taxonomy" id="434924"/>
    <lineage>
        <taxon>Bacteria</taxon>
        <taxon>Pseudomonadati</taxon>
        <taxon>Pseudomonadota</taxon>
        <taxon>Gammaproteobacteria</taxon>
        <taxon>Legionellales</taxon>
        <taxon>Coxiellaceae</taxon>
        <taxon>Coxiella</taxon>
    </lineage>
</organism>
<dbReference type="EC" id="3.5.1.108" evidence="1"/>
<dbReference type="EMBL" id="CP001020">
    <property type="protein sequence ID" value="ACJ21022.1"/>
    <property type="molecule type" value="Genomic_DNA"/>
</dbReference>
<dbReference type="RefSeq" id="WP_005769498.1">
    <property type="nucleotide sequence ID" value="NC_011528.1"/>
</dbReference>
<dbReference type="SMR" id="B6J5J6"/>
<dbReference type="KEGG" id="cbc:CbuK_1912"/>
<dbReference type="HOGENOM" id="CLU_046528_1_0_6"/>
<dbReference type="UniPathway" id="UPA00359">
    <property type="reaction ID" value="UER00478"/>
</dbReference>
<dbReference type="GO" id="GO:0016020">
    <property type="term" value="C:membrane"/>
    <property type="evidence" value="ECO:0007669"/>
    <property type="project" value="GOC"/>
</dbReference>
<dbReference type="GO" id="GO:0046872">
    <property type="term" value="F:metal ion binding"/>
    <property type="evidence" value="ECO:0007669"/>
    <property type="project" value="UniProtKB-KW"/>
</dbReference>
<dbReference type="GO" id="GO:0103117">
    <property type="term" value="F:UDP-3-O-acyl-N-acetylglucosamine deacetylase activity"/>
    <property type="evidence" value="ECO:0007669"/>
    <property type="project" value="UniProtKB-UniRule"/>
</dbReference>
<dbReference type="GO" id="GO:0009245">
    <property type="term" value="P:lipid A biosynthetic process"/>
    <property type="evidence" value="ECO:0007669"/>
    <property type="project" value="UniProtKB-UniRule"/>
</dbReference>
<dbReference type="Gene3D" id="3.30.230.20">
    <property type="entry name" value="lpxc deacetylase, domain 1"/>
    <property type="match status" value="1"/>
</dbReference>
<dbReference type="Gene3D" id="3.30.1700.10">
    <property type="entry name" value="lpxc deacetylase, domain 2"/>
    <property type="match status" value="1"/>
</dbReference>
<dbReference type="HAMAP" id="MF_00388">
    <property type="entry name" value="LpxC"/>
    <property type="match status" value="1"/>
</dbReference>
<dbReference type="InterPro" id="IPR020568">
    <property type="entry name" value="Ribosomal_Su5_D2-typ_SF"/>
</dbReference>
<dbReference type="InterPro" id="IPR004463">
    <property type="entry name" value="UDP-acyl_GlcNac_deAcase"/>
</dbReference>
<dbReference type="InterPro" id="IPR011334">
    <property type="entry name" value="UDP-acyl_GlcNac_deAcase_C"/>
</dbReference>
<dbReference type="InterPro" id="IPR015870">
    <property type="entry name" value="UDP-acyl_N-AcGlcN_deAcase_N"/>
</dbReference>
<dbReference type="NCBIfam" id="TIGR00325">
    <property type="entry name" value="lpxC"/>
    <property type="match status" value="1"/>
</dbReference>
<dbReference type="PANTHER" id="PTHR33694">
    <property type="entry name" value="UDP-3-O-ACYL-N-ACETYLGLUCOSAMINE DEACETYLASE 1, MITOCHONDRIAL-RELATED"/>
    <property type="match status" value="1"/>
</dbReference>
<dbReference type="PANTHER" id="PTHR33694:SF1">
    <property type="entry name" value="UDP-3-O-ACYL-N-ACETYLGLUCOSAMINE DEACETYLASE 1, MITOCHONDRIAL-RELATED"/>
    <property type="match status" value="1"/>
</dbReference>
<dbReference type="Pfam" id="PF03331">
    <property type="entry name" value="LpxC"/>
    <property type="match status" value="1"/>
</dbReference>
<dbReference type="SUPFAM" id="SSF54211">
    <property type="entry name" value="Ribosomal protein S5 domain 2-like"/>
    <property type="match status" value="2"/>
</dbReference>
<proteinExistence type="inferred from homology"/>
<evidence type="ECO:0000255" key="1">
    <source>
        <dbReference type="HAMAP-Rule" id="MF_00388"/>
    </source>
</evidence>
<reference key="1">
    <citation type="journal article" date="2009" name="Infect. Immun.">
        <title>Comparative genomics reveal extensive transposon-mediated genomic plasticity and diversity among potential effector proteins within the genus Coxiella.</title>
        <authorList>
            <person name="Beare P.A."/>
            <person name="Unsworth N."/>
            <person name="Andoh M."/>
            <person name="Voth D.E."/>
            <person name="Omsland A."/>
            <person name="Gilk S.D."/>
            <person name="Williams K.P."/>
            <person name="Sobral B.W."/>
            <person name="Kupko J.J. III"/>
            <person name="Porcella S.F."/>
            <person name="Samuel J.E."/>
            <person name="Heinzen R.A."/>
        </authorList>
    </citation>
    <scope>NUCLEOTIDE SEQUENCE [LARGE SCALE GENOMIC DNA]</scope>
    <source>
        <strain>CbuK_Q154</strain>
    </source>
</reference>
<accession>B6J5J6</accession>
<comment type="function">
    <text evidence="1">Catalyzes the hydrolysis of UDP-3-O-myristoyl-N-acetylglucosamine to form UDP-3-O-myristoylglucosamine and acetate, the committed step in lipid A biosynthesis.</text>
</comment>
<comment type="catalytic activity">
    <reaction evidence="1">
        <text>a UDP-3-O-[(3R)-3-hydroxyacyl]-N-acetyl-alpha-D-glucosamine + H2O = a UDP-3-O-[(3R)-3-hydroxyacyl]-alpha-D-glucosamine + acetate</text>
        <dbReference type="Rhea" id="RHEA:67816"/>
        <dbReference type="ChEBI" id="CHEBI:15377"/>
        <dbReference type="ChEBI" id="CHEBI:30089"/>
        <dbReference type="ChEBI" id="CHEBI:137740"/>
        <dbReference type="ChEBI" id="CHEBI:173225"/>
        <dbReference type="EC" id="3.5.1.108"/>
    </reaction>
</comment>
<comment type="cofactor">
    <cofactor evidence="1">
        <name>Zn(2+)</name>
        <dbReference type="ChEBI" id="CHEBI:29105"/>
    </cofactor>
</comment>
<comment type="pathway">
    <text evidence="1">Glycolipid biosynthesis; lipid IV(A) biosynthesis; lipid IV(A) from (3R)-3-hydroxytetradecanoyl-[acyl-carrier-protein] and UDP-N-acetyl-alpha-D-glucosamine: step 2/6.</text>
</comment>
<comment type="similarity">
    <text evidence="1">Belongs to the LpxC family.</text>
</comment>
<name>LPXC_COXB1</name>
<gene>
    <name evidence="1" type="primary">lpxC</name>
    <name type="ordered locus">CbuK_1912</name>
</gene>
<protein>
    <recommendedName>
        <fullName evidence="1">UDP-3-O-acyl-N-acetylglucosamine deacetylase</fullName>
        <shortName evidence="1">UDP-3-O-acyl-GlcNAc deacetylase</shortName>
        <ecNumber evidence="1">3.5.1.108</ecNumber>
    </recommendedName>
    <alternativeName>
        <fullName evidence="1">UDP-3-O-[R-3-hydroxymyristoyl]-N-acetylglucosamine deacetylase</fullName>
    </alternativeName>
</protein>